<gene>
    <name type="primary">dys</name>
    <name type="ordered locus">PAE3487</name>
</gene>
<sequence>MREIIELYRKVGGFQALHVAEAYDVLKEAVEAADVRFLSFTGNLVATGLREFIADAIRRRLFNVVVTTAGALDHDIAKSMGAVYAPGSFDLDDVDLAAKGYHRLGNVVIKKEEYGPLVEKFILAHCEKLWGKTLATYELAYLLGAELPEDSILGAAARAGAKVFVPGIVDGAVGTALMTCNDLARTKRGGSRAFIDVLKDEEELREIVHNSKKLAALIVGGGISKHHVIWWAQFKGGLDYVVYISTAVEYDGSLSGARPREAISWGKVKPSAKSVFIFADATLVLPVLLKAL</sequence>
<proteinExistence type="inferred from homology"/>
<accession>Q8ZT09</accession>
<name>DHYS_PYRAE</name>
<feature type="chain" id="PRO_0000134503" description="Probable deoxyhypusine synthase">
    <location>
        <begin position="1"/>
        <end position="292"/>
    </location>
</feature>
<feature type="active site" description="Nucleophile" evidence="1">
    <location>
        <position position="267"/>
    </location>
</feature>
<protein>
    <recommendedName>
        <fullName>Probable deoxyhypusine synthase</fullName>
        <shortName>DHS</shortName>
        <ecNumber>2.5.1.46</ecNumber>
    </recommendedName>
</protein>
<evidence type="ECO:0000250" key="1"/>
<evidence type="ECO:0000305" key="2"/>
<dbReference type="EC" id="2.5.1.46"/>
<dbReference type="EMBL" id="AE009441">
    <property type="protein sequence ID" value="AAL64954.1"/>
    <property type="molecule type" value="Genomic_DNA"/>
</dbReference>
<dbReference type="RefSeq" id="WP_011009421.1">
    <property type="nucleotide sequence ID" value="NC_003364.1"/>
</dbReference>
<dbReference type="SMR" id="Q8ZT09"/>
<dbReference type="FunCoup" id="Q8ZT09">
    <property type="interactions" value="162"/>
</dbReference>
<dbReference type="STRING" id="178306.PAE3487"/>
<dbReference type="EnsemblBacteria" id="AAL64954">
    <property type="protein sequence ID" value="AAL64954"/>
    <property type="gene ID" value="PAE3487"/>
</dbReference>
<dbReference type="GeneID" id="1466085"/>
<dbReference type="KEGG" id="pai:PAE3487"/>
<dbReference type="PATRIC" id="fig|178306.9.peg.2626"/>
<dbReference type="eggNOG" id="arCOG04142">
    <property type="taxonomic scope" value="Archaea"/>
</dbReference>
<dbReference type="HOGENOM" id="CLU_039781_1_0_2"/>
<dbReference type="InParanoid" id="Q8ZT09"/>
<dbReference type="UniPathway" id="UPA00354"/>
<dbReference type="Proteomes" id="UP000002439">
    <property type="component" value="Chromosome"/>
</dbReference>
<dbReference type="GO" id="GO:0005737">
    <property type="term" value="C:cytoplasm"/>
    <property type="evidence" value="ECO:0000318"/>
    <property type="project" value="GO_Central"/>
</dbReference>
<dbReference type="GO" id="GO:0034038">
    <property type="term" value="F:deoxyhypusine synthase activity"/>
    <property type="evidence" value="ECO:0000318"/>
    <property type="project" value="GO_Central"/>
</dbReference>
<dbReference type="GO" id="GO:0008216">
    <property type="term" value="P:spermidine metabolic process"/>
    <property type="evidence" value="ECO:0000318"/>
    <property type="project" value="GO_Central"/>
</dbReference>
<dbReference type="Gene3D" id="3.40.910.10">
    <property type="entry name" value="Deoxyhypusine synthase"/>
    <property type="match status" value="1"/>
</dbReference>
<dbReference type="HAMAP" id="MF_00153">
    <property type="entry name" value="DHS"/>
    <property type="match status" value="1"/>
</dbReference>
<dbReference type="InterPro" id="IPR022899">
    <property type="entry name" value="Deoxyhypus_synthase_arc"/>
</dbReference>
<dbReference type="InterPro" id="IPR002773">
    <property type="entry name" value="Deoxyhypusine_synthase"/>
</dbReference>
<dbReference type="InterPro" id="IPR036982">
    <property type="entry name" value="Deoxyhypusine_synthase_sf"/>
</dbReference>
<dbReference type="InterPro" id="IPR029035">
    <property type="entry name" value="DHS-like_NAD/FAD-binding_dom"/>
</dbReference>
<dbReference type="NCBIfam" id="NF002294">
    <property type="entry name" value="PRK01221.1"/>
    <property type="match status" value="1"/>
</dbReference>
<dbReference type="PANTHER" id="PTHR11703">
    <property type="entry name" value="DEOXYHYPUSINE SYNTHASE"/>
    <property type="match status" value="1"/>
</dbReference>
<dbReference type="PANTHER" id="PTHR11703:SF0">
    <property type="entry name" value="DEOXYHYPUSINE SYNTHASE"/>
    <property type="match status" value="1"/>
</dbReference>
<dbReference type="Pfam" id="PF01916">
    <property type="entry name" value="DS"/>
    <property type="match status" value="1"/>
</dbReference>
<dbReference type="SUPFAM" id="SSF52467">
    <property type="entry name" value="DHS-like NAD/FAD-binding domain"/>
    <property type="match status" value="1"/>
</dbReference>
<reference key="1">
    <citation type="journal article" date="2002" name="Proc. Natl. Acad. Sci. U.S.A.">
        <title>Genome sequence of the hyperthermophilic crenarchaeon Pyrobaculum aerophilum.</title>
        <authorList>
            <person name="Fitz-Gibbon S.T."/>
            <person name="Ladner H."/>
            <person name="Kim U.-J."/>
            <person name="Stetter K.O."/>
            <person name="Simon M.I."/>
            <person name="Miller J.H."/>
        </authorList>
    </citation>
    <scope>NUCLEOTIDE SEQUENCE [LARGE SCALE GENOMIC DNA]</scope>
    <source>
        <strain>ATCC 51768 / DSM 7523 / JCM 9630 / CIP 104966 / NBRC 100827 / IM2</strain>
    </source>
</reference>
<keyword id="KW-0386">Hypusine biosynthesis</keyword>
<keyword id="KW-0520">NAD</keyword>
<keyword id="KW-1185">Reference proteome</keyword>
<keyword id="KW-0808">Transferase</keyword>
<comment type="function">
    <text evidence="1">Catalyzes the NAD-dependent oxidative cleavage of spermidine and the subsequent transfer of the butylamine moiety of spermidine to the epsilon-amino group of a specific lysine residue of the eIF-5A precursor protein to form the intermediate deoxyhypusine residue.</text>
</comment>
<comment type="catalytic activity">
    <reaction>
        <text>[eIF5A protein]-L-lysine + spermidine = [eIF5A protein]-deoxyhypusine + propane-1,3-diamine</text>
        <dbReference type="Rhea" id="RHEA:33299"/>
        <dbReference type="Rhea" id="RHEA-COMP:10143"/>
        <dbReference type="Rhea" id="RHEA-COMP:10144"/>
        <dbReference type="ChEBI" id="CHEBI:29969"/>
        <dbReference type="ChEBI" id="CHEBI:57484"/>
        <dbReference type="ChEBI" id="CHEBI:57834"/>
        <dbReference type="ChEBI" id="CHEBI:82657"/>
        <dbReference type="EC" id="2.5.1.46"/>
    </reaction>
</comment>
<comment type="cofactor">
    <cofactor evidence="1">
        <name>NAD(+)</name>
        <dbReference type="ChEBI" id="CHEBI:57540"/>
    </cofactor>
</comment>
<comment type="pathway">
    <text>Protein modification; eIF5A hypusination.</text>
</comment>
<comment type="similarity">
    <text evidence="2">Belongs to the deoxyhypusine synthase family.</text>
</comment>
<organism>
    <name type="scientific">Pyrobaculum aerophilum (strain ATCC 51768 / DSM 7523 / JCM 9630 / CIP 104966 / NBRC 100827 / IM2)</name>
    <dbReference type="NCBI Taxonomy" id="178306"/>
    <lineage>
        <taxon>Archaea</taxon>
        <taxon>Thermoproteota</taxon>
        <taxon>Thermoprotei</taxon>
        <taxon>Thermoproteales</taxon>
        <taxon>Thermoproteaceae</taxon>
        <taxon>Pyrobaculum</taxon>
    </lineage>
</organism>